<gene>
    <name evidence="1" type="primary">gpsA</name>
    <name type="ordered locus">HPSH_05065</name>
</gene>
<reference key="1">
    <citation type="submission" date="2008-05" db="EMBL/GenBank/DDBJ databases">
        <title>Genome sequence of Helicobacter pylori from the remote Amazon: traces of Asian ancestry of the first Americans.</title>
        <authorList>
            <person name="Kersulyte D."/>
            <person name="Kalia A."/>
            <person name="Gilman R.H."/>
            <person name="Berg D.E."/>
        </authorList>
    </citation>
    <scope>NUCLEOTIDE SEQUENCE [LARGE SCALE GENOMIC DNA]</scope>
    <source>
        <strain>Shi470</strain>
    </source>
</reference>
<protein>
    <recommendedName>
        <fullName evidence="1">Glycerol-3-phosphate dehydrogenase [NAD(P)+]</fullName>
        <ecNumber evidence="1">1.1.1.94</ecNumber>
    </recommendedName>
    <alternativeName>
        <fullName evidence="1">NAD(P)(+)-dependent glycerol-3-phosphate dehydrogenase</fullName>
    </alternativeName>
    <alternativeName>
        <fullName evidence="1">NAD(P)H-dependent dihydroxyacetone-phosphate reductase</fullName>
    </alternativeName>
</protein>
<comment type="function">
    <text evidence="1">Catalyzes the reduction of the glycolytic intermediate dihydroxyacetone phosphate (DHAP) to sn-glycerol 3-phosphate (G3P), the key precursor for phospholipid synthesis.</text>
</comment>
<comment type="catalytic activity">
    <reaction evidence="1">
        <text>sn-glycerol 3-phosphate + NAD(+) = dihydroxyacetone phosphate + NADH + H(+)</text>
        <dbReference type="Rhea" id="RHEA:11092"/>
        <dbReference type="ChEBI" id="CHEBI:15378"/>
        <dbReference type="ChEBI" id="CHEBI:57540"/>
        <dbReference type="ChEBI" id="CHEBI:57597"/>
        <dbReference type="ChEBI" id="CHEBI:57642"/>
        <dbReference type="ChEBI" id="CHEBI:57945"/>
        <dbReference type="EC" id="1.1.1.94"/>
    </reaction>
    <physiologicalReaction direction="right-to-left" evidence="1">
        <dbReference type="Rhea" id="RHEA:11094"/>
    </physiologicalReaction>
</comment>
<comment type="catalytic activity">
    <reaction evidence="1">
        <text>sn-glycerol 3-phosphate + NADP(+) = dihydroxyacetone phosphate + NADPH + H(+)</text>
        <dbReference type="Rhea" id="RHEA:11096"/>
        <dbReference type="ChEBI" id="CHEBI:15378"/>
        <dbReference type="ChEBI" id="CHEBI:57597"/>
        <dbReference type="ChEBI" id="CHEBI:57642"/>
        <dbReference type="ChEBI" id="CHEBI:57783"/>
        <dbReference type="ChEBI" id="CHEBI:58349"/>
        <dbReference type="EC" id="1.1.1.94"/>
    </reaction>
    <physiologicalReaction direction="right-to-left" evidence="1">
        <dbReference type="Rhea" id="RHEA:11098"/>
    </physiologicalReaction>
</comment>
<comment type="pathway">
    <text evidence="1">Membrane lipid metabolism; glycerophospholipid metabolism.</text>
</comment>
<comment type="subcellular location">
    <subcellularLocation>
        <location evidence="1">Cytoplasm</location>
    </subcellularLocation>
</comment>
<comment type="similarity">
    <text evidence="1">Belongs to the NAD-dependent glycerol-3-phosphate dehydrogenase family.</text>
</comment>
<organism>
    <name type="scientific">Helicobacter pylori (strain Shi470)</name>
    <dbReference type="NCBI Taxonomy" id="512562"/>
    <lineage>
        <taxon>Bacteria</taxon>
        <taxon>Pseudomonadati</taxon>
        <taxon>Campylobacterota</taxon>
        <taxon>Epsilonproteobacteria</taxon>
        <taxon>Campylobacterales</taxon>
        <taxon>Helicobacteraceae</taxon>
        <taxon>Helicobacter</taxon>
    </lineage>
</organism>
<evidence type="ECO:0000255" key="1">
    <source>
        <dbReference type="HAMAP-Rule" id="MF_00394"/>
    </source>
</evidence>
<feature type="chain" id="PRO_1000190158" description="Glycerol-3-phosphate dehydrogenase [NAD(P)+]">
    <location>
        <begin position="1"/>
        <end position="312"/>
    </location>
</feature>
<feature type="active site" description="Proton acceptor" evidence="1">
    <location>
        <position position="177"/>
    </location>
</feature>
<feature type="binding site" evidence="1">
    <location>
        <position position="11"/>
    </location>
    <ligand>
        <name>NADPH</name>
        <dbReference type="ChEBI" id="CHEBI:57783"/>
    </ligand>
</feature>
<feature type="binding site" evidence="1">
    <location>
        <position position="30"/>
    </location>
    <ligand>
        <name>NADPH</name>
        <dbReference type="ChEBI" id="CHEBI:57783"/>
    </ligand>
</feature>
<feature type="binding site" evidence="1">
    <location>
        <position position="31"/>
    </location>
    <ligand>
        <name>NADPH</name>
        <dbReference type="ChEBI" id="CHEBI:57783"/>
    </ligand>
</feature>
<feature type="binding site" evidence="1">
    <location>
        <position position="95"/>
    </location>
    <ligand>
        <name>NADPH</name>
        <dbReference type="ChEBI" id="CHEBI:57783"/>
    </ligand>
</feature>
<feature type="binding site" evidence="1">
    <location>
        <position position="95"/>
    </location>
    <ligand>
        <name>sn-glycerol 3-phosphate</name>
        <dbReference type="ChEBI" id="CHEBI:57597"/>
    </ligand>
</feature>
<feature type="binding site" evidence="1">
    <location>
        <position position="123"/>
    </location>
    <ligand>
        <name>sn-glycerol 3-phosphate</name>
        <dbReference type="ChEBI" id="CHEBI:57597"/>
    </ligand>
</feature>
<feature type="binding site" evidence="1">
    <location>
        <position position="125"/>
    </location>
    <ligand>
        <name>sn-glycerol 3-phosphate</name>
        <dbReference type="ChEBI" id="CHEBI:57597"/>
    </ligand>
</feature>
<feature type="binding site" evidence="1">
    <location>
        <position position="127"/>
    </location>
    <ligand>
        <name>NADPH</name>
        <dbReference type="ChEBI" id="CHEBI:57783"/>
    </ligand>
</feature>
<feature type="binding site" evidence="1">
    <location>
        <position position="177"/>
    </location>
    <ligand>
        <name>sn-glycerol 3-phosphate</name>
        <dbReference type="ChEBI" id="CHEBI:57597"/>
    </ligand>
</feature>
<feature type="binding site" evidence="1">
    <location>
        <position position="230"/>
    </location>
    <ligand>
        <name>sn-glycerol 3-phosphate</name>
        <dbReference type="ChEBI" id="CHEBI:57597"/>
    </ligand>
</feature>
<feature type="binding site" evidence="1">
    <location>
        <position position="240"/>
    </location>
    <ligand>
        <name>sn-glycerol 3-phosphate</name>
        <dbReference type="ChEBI" id="CHEBI:57597"/>
    </ligand>
</feature>
<feature type="binding site" evidence="1">
    <location>
        <position position="241"/>
    </location>
    <ligand>
        <name>NADPH</name>
        <dbReference type="ChEBI" id="CHEBI:57783"/>
    </ligand>
</feature>
<feature type="binding site" evidence="1">
    <location>
        <position position="241"/>
    </location>
    <ligand>
        <name>sn-glycerol 3-phosphate</name>
        <dbReference type="ChEBI" id="CHEBI:57597"/>
    </ligand>
</feature>
<feature type="binding site" evidence="1">
    <location>
        <position position="242"/>
    </location>
    <ligand>
        <name>sn-glycerol 3-phosphate</name>
        <dbReference type="ChEBI" id="CHEBI:57597"/>
    </ligand>
</feature>
<feature type="binding site" evidence="1">
    <location>
        <position position="265"/>
    </location>
    <ligand>
        <name>NADPH</name>
        <dbReference type="ChEBI" id="CHEBI:57783"/>
    </ligand>
</feature>
<feature type="binding site" evidence="1">
    <location>
        <position position="267"/>
    </location>
    <ligand>
        <name>NADPH</name>
        <dbReference type="ChEBI" id="CHEBI:57783"/>
    </ligand>
</feature>
<proteinExistence type="inferred from homology"/>
<keyword id="KW-0963">Cytoplasm</keyword>
<keyword id="KW-0444">Lipid biosynthesis</keyword>
<keyword id="KW-0443">Lipid metabolism</keyword>
<keyword id="KW-0520">NAD</keyword>
<keyword id="KW-0521">NADP</keyword>
<keyword id="KW-0547">Nucleotide-binding</keyword>
<keyword id="KW-0560">Oxidoreductase</keyword>
<keyword id="KW-0594">Phospholipid biosynthesis</keyword>
<keyword id="KW-1208">Phospholipid metabolism</keyword>
<sequence>MEIAVFGGGAWGRALAFAFGEKNEVKIISRRDLNEPLKKLNDALISKGSAPIEQVDLQRGLKAVLYVIAISVQHLREWFQNASLPKNAKVLIASKGIEVLNRAFVSEIAKDFIDPNSLCFLAGPSFAAEIIQGLPCALVIHSNNQALALEFANKTPSFIRAYAQQDIIGGEIAGAYKNVIAIAGGVCDGLKLGNSAKASLLSRGLVEMQRFGAFFGGKTETFLGLSGAGDLFLTANSILSRNYRVGLGLAQNKPLEVVLEELGEVAEGVKTTNAIVEIARKYGIYTPIASELALLLKGKSVLESMNDLIRRA</sequence>
<name>GPDA_HELPS</name>
<dbReference type="EC" id="1.1.1.94" evidence="1"/>
<dbReference type="EMBL" id="CP001072">
    <property type="protein sequence ID" value="ACD48439.1"/>
    <property type="molecule type" value="Genomic_DNA"/>
</dbReference>
<dbReference type="RefSeq" id="WP_000401716.1">
    <property type="nucleotide sequence ID" value="NC_010698.2"/>
</dbReference>
<dbReference type="SMR" id="B2UUA7"/>
<dbReference type="KEGG" id="hps:HPSH_05065"/>
<dbReference type="HOGENOM" id="CLU_033449_0_2_7"/>
<dbReference type="UniPathway" id="UPA00940"/>
<dbReference type="GO" id="GO:0005829">
    <property type="term" value="C:cytosol"/>
    <property type="evidence" value="ECO:0007669"/>
    <property type="project" value="TreeGrafter"/>
</dbReference>
<dbReference type="GO" id="GO:0047952">
    <property type="term" value="F:glycerol-3-phosphate dehydrogenase [NAD(P)+] activity"/>
    <property type="evidence" value="ECO:0007669"/>
    <property type="project" value="UniProtKB-UniRule"/>
</dbReference>
<dbReference type="GO" id="GO:0051287">
    <property type="term" value="F:NAD binding"/>
    <property type="evidence" value="ECO:0007669"/>
    <property type="project" value="InterPro"/>
</dbReference>
<dbReference type="GO" id="GO:0005975">
    <property type="term" value="P:carbohydrate metabolic process"/>
    <property type="evidence" value="ECO:0007669"/>
    <property type="project" value="InterPro"/>
</dbReference>
<dbReference type="GO" id="GO:0046167">
    <property type="term" value="P:glycerol-3-phosphate biosynthetic process"/>
    <property type="evidence" value="ECO:0007669"/>
    <property type="project" value="UniProtKB-UniRule"/>
</dbReference>
<dbReference type="GO" id="GO:0046168">
    <property type="term" value="P:glycerol-3-phosphate catabolic process"/>
    <property type="evidence" value="ECO:0007669"/>
    <property type="project" value="InterPro"/>
</dbReference>
<dbReference type="GO" id="GO:0006650">
    <property type="term" value="P:glycerophospholipid metabolic process"/>
    <property type="evidence" value="ECO:0007669"/>
    <property type="project" value="UniProtKB-UniRule"/>
</dbReference>
<dbReference type="GO" id="GO:0008654">
    <property type="term" value="P:phospholipid biosynthetic process"/>
    <property type="evidence" value="ECO:0007669"/>
    <property type="project" value="UniProtKB-KW"/>
</dbReference>
<dbReference type="FunFam" id="1.10.1040.10:FF:000025">
    <property type="entry name" value="Glycerol-3-phosphate dehydrogenase [NAD(P)+]"/>
    <property type="match status" value="1"/>
</dbReference>
<dbReference type="FunFam" id="3.40.50.720:FF:000310">
    <property type="entry name" value="Glycerol-3-phosphate dehydrogenase [NAD(P)+]"/>
    <property type="match status" value="1"/>
</dbReference>
<dbReference type="Gene3D" id="1.10.1040.10">
    <property type="entry name" value="N-(1-d-carboxylethyl)-l-norvaline Dehydrogenase, domain 2"/>
    <property type="match status" value="1"/>
</dbReference>
<dbReference type="Gene3D" id="3.40.50.720">
    <property type="entry name" value="NAD(P)-binding Rossmann-like Domain"/>
    <property type="match status" value="1"/>
</dbReference>
<dbReference type="HAMAP" id="MF_00394">
    <property type="entry name" value="NAD_Glyc3P_dehydrog"/>
    <property type="match status" value="1"/>
</dbReference>
<dbReference type="InterPro" id="IPR008927">
    <property type="entry name" value="6-PGluconate_DH-like_C_sf"/>
</dbReference>
<dbReference type="InterPro" id="IPR013328">
    <property type="entry name" value="6PGD_dom2"/>
</dbReference>
<dbReference type="InterPro" id="IPR006168">
    <property type="entry name" value="G3P_DH_NAD-dep"/>
</dbReference>
<dbReference type="InterPro" id="IPR006109">
    <property type="entry name" value="G3P_DH_NAD-dep_C"/>
</dbReference>
<dbReference type="InterPro" id="IPR011128">
    <property type="entry name" value="G3P_DH_NAD-dep_N"/>
</dbReference>
<dbReference type="InterPro" id="IPR036291">
    <property type="entry name" value="NAD(P)-bd_dom_sf"/>
</dbReference>
<dbReference type="NCBIfam" id="NF000940">
    <property type="entry name" value="PRK00094.1-2"/>
    <property type="match status" value="1"/>
</dbReference>
<dbReference type="NCBIfam" id="NF000943">
    <property type="entry name" value="PRK00094.2-1"/>
    <property type="match status" value="1"/>
</dbReference>
<dbReference type="PANTHER" id="PTHR11728">
    <property type="entry name" value="GLYCEROL-3-PHOSPHATE DEHYDROGENASE"/>
    <property type="match status" value="1"/>
</dbReference>
<dbReference type="PANTHER" id="PTHR11728:SF1">
    <property type="entry name" value="GLYCEROL-3-PHOSPHATE DEHYDROGENASE [NAD(+)] 2, CHLOROPLASTIC"/>
    <property type="match status" value="1"/>
</dbReference>
<dbReference type="Pfam" id="PF07479">
    <property type="entry name" value="NAD_Gly3P_dh_C"/>
    <property type="match status" value="1"/>
</dbReference>
<dbReference type="Pfam" id="PF01210">
    <property type="entry name" value="NAD_Gly3P_dh_N"/>
    <property type="match status" value="1"/>
</dbReference>
<dbReference type="PIRSF" id="PIRSF000114">
    <property type="entry name" value="Glycerol-3-P_dh"/>
    <property type="match status" value="1"/>
</dbReference>
<dbReference type="PRINTS" id="PR00077">
    <property type="entry name" value="GPDHDRGNASE"/>
</dbReference>
<dbReference type="SUPFAM" id="SSF48179">
    <property type="entry name" value="6-phosphogluconate dehydrogenase C-terminal domain-like"/>
    <property type="match status" value="1"/>
</dbReference>
<dbReference type="SUPFAM" id="SSF51735">
    <property type="entry name" value="NAD(P)-binding Rossmann-fold domains"/>
    <property type="match status" value="1"/>
</dbReference>
<dbReference type="PROSITE" id="PS00957">
    <property type="entry name" value="NAD_G3PDH"/>
    <property type="match status" value="1"/>
</dbReference>
<accession>B2UUA7</accession>